<name>DXS_SACEN</name>
<sequence>MTLLESVQSPADVKRLEHGELAKLAAEIRSFLIEKVSRTGGHLGPNLGAIELTLAVHRVFDSPRDAVVFDTGHQAYVHKIVTGRQSGFDRLRKRDGISGYPSRAESEHDLVENSHASTALSYADGLARAFQLGSEQRHVVAVVGDGALTGGMCWEALNNIAADPDRPVVIVVNDNGRSYAPTIGGLAEHLAGLRLKPGYERALESGRRTLQNLPVVGRSLYTGLHAAKSGIKDALSPQVMFSDLGIKYLGPVDGHDLRSMEQALSMAKAFGGPVIVHAVTRKGNGFAPAENDVAEQMHQVKVIDPETGIPTKPAPKIWTDVYSDELVRIGAEREDVVAITAAMLGPTGLDKFAAAYPERCYDVGIAEQHAMTSAAGMAMGGLHPVFAVYSTFLNRAFDQLLMDVALHRQPVTVTLDRSGITGDDGASHNGMWDLSILGAIPGIQVAAPRDAVTLREELREAVAVDDGPTVMRFPKGSVIEEVPAVERIGGVDVLSKPASDERSEVLLAAVGAFGQLGVAVAERLAAQGIGVTVVDPRWVVPVPQAVLDLAARHSLVVTLEDCGRHGGFGWSLAAAMRDQEIDVPLRDLAVPNRFLQHASRDEVLSDLGLTEQDIARRITEWVAGRLTPVVVGNGRGETATGA</sequence>
<keyword id="KW-0414">Isoprene biosynthesis</keyword>
<keyword id="KW-0460">Magnesium</keyword>
<keyword id="KW-0479">Metal-binding</keyword>
<keyword id="KW-1185">Reference proteome</keyword>
<keyword id="KW-0784">Thiamine biosynthesis</keyword>
<keyword id="KW-0786">Thiamine pyrophosphate</keyword>
<keyword id="KW-0808">Transferase</keyword>
<proteinExistence type="inferred from homology"/>
<accession>A4FAQ5</accession>
<gene>
    <name evidence="1" type="primary">dxs</name>
    <name type="ordered locus">SACE_1815</name>
</gene>
<comment type="function">
    <text evidence="1">Catalyzes the acyloin condensation reaction between C atoms 2 and 3 of pyruvate and glyceraldehyde 3-phosphate to yield 1-deoxy-D-xylulose-5-phosphate (DXP).</text>
</comment>
<comment type="catalytic activity">
    <reaction evidence="1">
        <text>D-glyceraldehyde 3-phosphate + pyruvate + H(+) = 1-deoxy-D-xylulose 5-phosphate + CO2</text>
        <dbReference type="Rhea" id="RHEA:12605"/>
        <dbReference type="ChEBI" id="CHEBI:15361"/>
        <dbReference type="ChEBI" id="CHEBI:15378"/>
        <dbReference type="ChEBI" id="CHEBI:16526"/>
        <dbReference type="ChEBI" id="CHEBI:57792"/>
        <dbReference type="ChEBI" id="CHEBI:59776"/>
        <dbReference type="EC" id="2.2.1.7"/>
    </reaction>
</comment>
<comment type="cofactor">
    <cofactor evidence="1">
        <name>Mg(2+)</name>
        <dbReference type="ChEBI" id="CHEBI:18420"/>
    </cofactor>
    <text evidence="1">Binds 1 Mg(2+) ion per subunit.</text>
</comment>
<comment type="cofactor">
    <cofactor evidence="1">
        <name>thiamine diphosphate</name>
        <dbReference type="ChEBI" id="CHEBI:58937"/>
    </cofactor>
    <text evidence="1">Binds 1 thiamine pyrophosphate per subunit.</text>
</comment>
<comment type="pathway">
    <text evidence="1">Metabolic intermediate biosynthesis; 1-deoxy-D-xylulose 5-phosphate biosynthesis; 1-deoxy-D-xylulose 5-phosphate from D-glyceraldehyde 3-phosphate and pyruvate: step 1/1.</text>
</comment>
<comment type="subunit">
    <text evidence="1">Homodimer.</text>
</comment>
<comment type="similarity">
    <text evidence="1">Belongs to the transketolase family. DXPS subfamily.</text>
</comment>
<protein>
    <recommendedName>
        <fullName evidence="1">1-deoxy-D-xylulose-5-phosphate synthase</fullName>
        <ecNumber evidence="1">2.2.1.7</ecNumber>
    </recommendedName>
    <alternativeName>
        <fullName evidence="1">1-deoxyxylulose-5-phosphate synthase</fullName>
        <shortName evidence="1">DXP synthase</shortName>
        <shortName evidence="1">DXPS</shortName>
    </alternativeName>
</protein>
<evidence type="ECO:0000255" key="1">
    <source>
        <dbReference type="HAMAP-Rule" id="MF_00315"/>
    </source>
</evidence>
<feature type="chain" id="PRO_1000019071" description="1-deoxy-D-xylulose-5-phosphate synthase">
    <location>
        <begin position="1"/>
        <end position="642"/>
    </location>
</feature>
<feature type="binding site" evidence="1">
    <location>
        <position position="73"/>
    </location>
    <ligand>
        <name>thiamine diphosphate</name>
        <dbReference type="ChEBI" id="CHEBI:58937"/>
    </ligand>
</feature>
<feature type="binding site" evidence="1">
    <location>
        <begin position="114"/>
        <end position="116"/>
    </location>
    <ligand>
        <name>thiamine diphosphate</name>
        <dbReference type="ChEBI" id="CHEBI:58937"/>
    </ligand>
</feature>
<feature type="binding site" evidence="1">
    <location>
        <position position="145"/>
    </location>
    <ligand>
        <name>Mg(2+)</name>
        <dbReference type="ChEBI" id="CHEBI:18420"/>
    </ligand>
</feature>
<feature type="binding site" evidence="1">
    <location>
        <begin position="146"/>
        <end position="147"/>
    </location>
    <ligand>
        <name>thiamine diphosphate</name>
        <dbReference type="ChEBI" id="CHEBI:58937"/>
    </ligand>
</feature>
<feature type="binding site" evidence="1">
    <location>
        <position position="175"/>
    </location>
    <ligand>
        <name>Mg(2+)</name>
        <dbReference type="ChEBI" id="CHEBI:18420"/>
    </ligand>
</feature>
<feature type="binding site" evidence="1">
    <location>
        <position position="175"/>
    </location>
    <ligand>
        <name>thiamine diphosphate</name>
        <dbReference type="ChEBI" id="CHEBI:58937"/>
    </ligand>
</feature>
<feature type="binding site" evidence="1">
    <location>
        <position position="286"/>
    </location>
    <ligand>
        <name>thiamine diphosphate</name>
        <dbReference type="ChEBI" id="CHEBI:58937"/>
    </ligand>
</feature>
<feature type="binding site" evidence="1">
    <location>
        <position position="367"/>
    </location>
    <ligand>
        <name>thiamine diphosphate</name>
        <dbReference type="ChEBI" id="CHEBI:58937"/>
    </ligand>
</feature>
<dbReference type="EC" id="2.2.1.7" evidence="1"/>
<dbReference type="EMBL" id="AM420293">
    <property type="protein sequence ID" value="CAM01130.1"/>
    <property type="molecule type" value="Genomic_DNA"/>
</dbReference>
<dbReference type="RefSeq" id="WP_009947314.1">
    <property type="nucleotide sequence ID" value="NC_009142.1"/>
</dbReference>
<dbReference type="SMR" id="A4FAQ5"/>
<dbReference type="STRING" id="405948.SACE_1815"/>
<dbReference type="KEGG" id="sen:SACE_1815"/>
<dbReference type="eggNOG" id="COG1154">
    <property type="taxonomic scope" value="Bacteria"/>
</dbReference>
<dbReference type="HOGENOM" id="CLU_009227_1_4_11"/>
<dbReference type="OrthoDB" id="9803371at2"/>
<dbReference type="UniPathway" id="UPA00064">
    <property type="reaction ID" value="UER00091"/>
</dbReference>
<dbReference type="Proteomes" id="UP000006728">
    <property type="component" value="Chromosome"/>
</dbReference>
<dbReference type="GO" id="GO:0005829">
    <property type="term" value="C:cytosol"/>
    <property type="evidence" value="ECO:0007669"/>
    <property type="project" value="TreeGrafter"/>
</dbReference>
<dbReference type="GO" id="GO:0008661">
    <property type="term" value="F:1-deoxy-D-xylulose-5-phosphate synthase activity"/>
    <property type="evidence" value="ECO:0007669"/>
    <property type="project" value="UniProtKB-UniRule"/>
</dbReference>
<dbReference type="GO" id="GO:0000287">
    <property type="term" value="F:magnesium ion binding"/>
    <property type="evidence" value="ECO:0007669"/>
    <property type="project" value="UniProtKB-UniRule"/>
</dbReference>
<dbReference type="GO" id="GO:0030976">
    <property type="term" value="F:thiamine pyrophosphate binding"/>
    <property type="evidence" value="ECO:0007669"/>
    <property type="project" value="UniProtKB-UniRule"/>
</dbReference>
<dbReference type="GO" id="GO:0052865">
    <property type="term" value="P:1-deoxy-D-xylulose 5-phosphate biosynthetic process"/>
    <property type="evidence" value="ECO:0007669"/>
    <property type="project" value="UniProtKB-UniPathway"/>
</dbReference>
<dbReference type="GO" id="GO:0019288">
    <property type="term" value="P:isopentenyl diphosphate biosynthetic process, methylerythritol 4-phosphate pathway"/>
    <property type="evidence" value="ECO:0007669"/>
    <property type="project" value="TreeGrafter"/>
</dbReference>
<dbReference type="GO" id="GO:0016114">
    <property type="term" value="P:terpenoid biosynthetic process"/>
    <property type="evidence" value="ECO:0007669"/>
    <property type="project" value="UniProtKB-UniRule"/>
</dbReference>
<dbReference type="GO" id="GO:0009228">
    <property type="term" value="P:thiamine biosynthetic process"/>
    <property type="evidence" value="ECO:0007669"/>
    <property type="project" value="UniProtKB-UniRule"/>
</dbReference>
<dbReference type="CDD" id="cd02007">
    <property type="entry name" value="TPP_DXS"/>
    <property type="match status" value="1"/>
</dbReference>
<dbReference type="CDD" id="cd07033">
    <property type="entry name" value="TPP_PYR_DXS_TK_like"/>
    <property type="match status" value="1"/>
</dbReference>
<dbReference type="FunFam" id="3.40.50.970:FF:000005">
    <property type="entry name" value="1-deoxy-D-xylulose-5-phosphate synthase"/>
    <property type="match status" value="1"/>
</dbReference>
<dbReference type="Gene3D" id="3.40.50.920">
    <property type="match status" value="1"/>
</dbReference>
<dbReference type="Gene3D" id="3.40.50.970">
    <property type="match status" value="2"/>
</dbReference>
<dbReference type="HAMAP" id="MF_00315">
    <property type="entry name" value="DXP_synth"/>
    <property type="match status" value="1"/>
</dbReference>
<dbReference type="InterPro" id="IPR005477">
    <property type="entry name" value="Dxylulose-5-P_synthase"/>
</dbReference>
<dbReference type="InterPro" id="IPR029061">
    <property type="entry name" value="THDP-binding"/>
</dbReference>
<dbReference type="InterPro" id="IPR009014">
    <property type="entry name" value="Transketo_C/PFOR_II"/>
</dbReference>
<dbReference type="InterPro" id="IPR005475">
    <property type="entry name" value="Transketolase-like_Pyr-bd"/>
</dbReference>
<dbReference type="InterPro" id="IPR020826">
    <property type="entry name" value="Transketolase_BS"/>
</dbReference>
<dbReference type="InterPro" id="IPR033248">
    <property type="entry name" value="Transketolase_C"/>
</dbReference>
<dbReference type="InterPro" id="IPR049557">
    <property type="entry name" value="Transketolase_CS"/>
</dbReference>
<dbReference type="NCBIfam" id="TIGR00204">
    <property type="entry name" value="dxs"/>
    <property type="match status" value="1"/>
</dbReference>
<dbReference type="NCBIfam" id="NF003933">
    <property type="entry name" value="PRK05444.2-2"/>
    <property type="match status" value="1"/>
</dbReference>
<dbReference type="PANTHER" id="PTHR43322">
    <property type="entry name" value="1-D-DEOXYXYLULOSE 5-PHOSPHATE SYNTHASE-RELATED"/>
    <property type="match status" value="1"/>
</dbReference>
<dbReference type="PANTHER" id="PTHR43322:SF5">
    <property type="entry name" value="1-DEOXY-D-XYLULOSE-5-PHOSPHATE SYNTHASE, CHLOROPLASTIC"/>
    <property type="match status" value="1"/>
</dbReference>
<dbReference type="Pfam" id="PF13292">
    <property type="entry name" value="DXP_synthase_N"/>
    <property type="match status" value="1"/>
</dbReference>
<dbReference type="Pfam" id="PF02779">
    <property type="entry name" value="Transket_pyr"/>
    <property type="match status" value="1"/>
</dbReference>
<dbReference type="Pfam" id="PF02780">
    <property type="entry name" value="Transketolase_C"/>
    <property type="match status" value="1"/>
</dbReference>
<dbReference type="SMART" id="SM00861">
    <property type="entry name" value="Transket_pyr"/>
    <property type="match status" value="1"/>
</dbReference>
<dbReference type="SUPFAM" id="SSF52518">
    <property type="entry name" value="Thiamin diphosphate-binding fold (THDP-binding)"/>
    <property type="match status" value="2"/>
</dbReference>
<dbReference type="SUPFAM" id="SSF52922">
    <property type="entry name" value="TK C-terminal domain-like"/>
    <property type="match status" value="1"/>
</dbReference>
<dbReference type="PROSITE" id="PS00801">
    <property type="entry name" value="TRANSKETOLASE_1"/>
    <property type="match status" value="1"/>
</dbReference>
<dbReference type="PROSITE" id="PS00802">
    <property type="entry name" value="TRANSKETOLASE_2"/>
    <property type="match status" value="1"/>
</dbReference>
<organism>
    <name type="scientific">Saccharopolyspora erythraea (strain ATCC 11635 / DSM 40517 / JCM 4748 / NBRC 13426 / NCIMB 8594 / NRRL 2338)</name>
    <dbReference type="NCBI Taxonomy" id="405948"/>
    <lineage>
        <taxon>Bacteria</taxon>
        <taxon>Bacillati</taxon>
        <taxon>Actinomycetota</taxon>
        <taxon>Actinomycetes</taxon>
        <taxon>Pseudonocardiales</taxon>
        <taxon>Pseudonocardiaceae</taxon>
        <taxon>Saccharopolyspora</taxon>
    </lineage>
</organism>
<reference key="1">
    <citation type="journal article" date="2007" name="Nat. Biotechnol.">
        <title>Complete genome sequence of the erythromycin-producing bacterium Saccharopolyspora erythraea NRRL23338.</title>
        <authorList>
            <person name="Oliynyk M."/>
            <person name="Samborskyy M."/>
            <person name="Lester J.B."/>
            <person name="Mironenko T."/>
            <person name="Scott N."/>
            <person name="Dickens S."/>
            <person name="Haydock S.F."/>
            <person name="Leadlay P.F."/>
        </authorList>
    </citation>
    <scope>NUCLEOTIDE SEQUENCE [LARGE SCALE GENOMIC DNA]</scope>
    <source>
        <strain>ATCC 11635 / DSM 40517 / JCM 4748 / NBRC 13426 / NCIMB 8594 / NRRL 2338</strain>
    </source>
</reference>